<comment type="function">
    <text>PPIases accelerate the folding of proteins.</text>
</comment>
<comment type="catalytic activity">
    <reaction>
        <text>[protein]-peptidylproline (omega=180) = [protein]-peptidylproline (omega=0)</text>
        <dbReference type="Rhea" id="RHEA:16237"/>
        <dbReference type="Rhea" id="RHEA-COMP:10747"/>
        <dbReference type="Rhea" id="RHEA-COMP:10748"/>
        <dbReference type="ChEBI" id="CHEBI:83833"/>
        <dbReference type="ChEBI" id="CHEBI:83834"/>
        <dbReference type="EC" id="5.2.1.8"/>
    </reaction>
</comment>
<comment type="subcellular location">
    <subcellularLocation>
        <location evidence="1">Cell outer membrane</location>
        <topology evidence="1">Peripheral membrane protein</topology>
    </subcellularLocation>
</comment>
<comment type="similarity">
    <text evidence="4">Belongs to the FKBP-type PPIase family.</text>
</comment>
<proteinExistence type="inferred from homology"/>
<protein>
    <recommendedName>
        <fullName>Peptidyl-prolyl cis-trans isomerase Mip</fullName>
        <shortName>PPIase</shortName>
        <ecNumber>5.2.1.8</ecNumber>
    </recommendedName>
    <alternativeName>
        <fullName>Rotamase</fullName>
    </alternativeName>
</protein>
<gene>
    <name type="primary">mip</name>
    <name type="ordered locus">CPn_0661</name>
    <name type="ordered locus">CP_0086</name>
    <name type="ordered locus">CpB0687</name>
</gene>
<organism>
    <name type="scientific">Chlamydia pneumoniae</name>
    <name type="common">Chlamydophila pneumoniae</name>
    <dbReference type="NCBI Taxonomy" id="83558"/>
    <lineage>
        <taxon>Bacteria</taxon>
        <taxon>Pseudomonadati</taxon>
        <taxon>Chlamydiota</taxon>
        <taxon>Chlamydiia</taxon>
        <taxon>Chlamydiales</taxon>
        <taxon>Chlamydiaceae</taxon>
        <taxon>Chlamydia/Chlamydophila group</taxon>
        <taxon>Chlamydia</taxon>
    </lineage>
</organism>
<name>MIP_CHLPN</name>
<dbReference type="EC" id="5.2.1.8"/>
<dbReference type="EMBL" id="AE001363">
    <property type="protein sequence ID" value="AAD18800.1"/>
    <property type="molecule type" value="Genomic_DNA"/>
</dbReference>
<dbReference type="EMBL" id="AE002161">
    <property type="protein sequence ID" value="AAF37972.1"/>
    <property type="molecule type" value="Genomic_DNA"/>
</dbReference>
<dbReference type="EMBL" id="BA000008">
    <property type="protein sequence ID" value="BAA98868.1"/>
    <property type="molecule type" value="Genomic_DNA"/>
</dbReference>
<dbReference type="EMBL" id="AE009440">
    <property type="protein sequence ID" value="AAP98616.1"/>
    <property type="molecule type" value="Genomic_DNA"/>
</dbReference>
<dbReference type="PIR" id="B86573">
    <property type="entry name" value="B86573"/>
</dbReference>
<dbReference type="PIR" id="F72052">
    <property type="entry name" value="F72052"/>
</dbReference>
<dbReference type="RefSeq" id="NP_224857.1">
    <property type="nucleotide sequence ID" value="NC_000922.1"/>
</dbReference>
<dbReference type="RefSeq" id="WP_010883299.1">
    <property type="nucleotide sequence ID" value="NZ_LN847257.1"/>
</dbReference>
<dbReference type="SMR" id="Q9Z7P3"/>
<dbReference type="STRING" id="406984.CPK_ORF00061"/>
<dbReference type="BindingDB" id="Q9Z7P3"/>
<dbReference type="ChEMBL" id="CHEMBL4105762"/>
<dbReference type="GeneID" id="45050712"/>
<dbReference type="KEGG" id="cpa:CP_0086"/>
<dbReference type="KEGG" id="cpj:mip"/>
<dbReference type="KEGG" id="cpn:CPn_0661"/>
<dbReference type="KEGG" id="cpt:CpB0687"/>
<dbReference type="PATRIC" id="fig|115713.3.peg.731"/>
<dbReference type="eggNOG" id="COG0545">
    <property type="taxonomic scope" value="Bacteria"/>
</dbReference>
<dbReference type="HOGENOM" id="CLU_013615_0_1_0"/>
<dbReference type="OMA" id="PAEFKLN"/>
<dbReference type="OrthoDB" id="9814548at2"/>
<dbReference type="Proteomes" id="UP000000583">
    <property type="component" value="Chromosome"/>
</dbReference>
<dbReference type="Proteomes" id="UP000000801">
    <property type="component" value="Chromosome"/>
</dbReference>
<dbReference type="GO" id="GO:0009279">
    <property type="term" value="C:cell outer membrane"/>
    <property type="evidence" value="ECO:0007669"/>
    <property type="project" value="UniProtKB-SubCell"/>
</dbReference>
<dbReference type="GO" id="GO:0003755">
    <property type="term" value="F:peptidyl-prolyl cis-trans isomerase activity"/>
    <property type="evidence" value="ECO:0007669"/>
    <property type="project" value="UniProtKB-KW"/>
</dbReference>
<dbReference type="GO" id="GO:0006457">
    <property type="term" value="P:protein folding"/>
    <property type="evidence" value="ECO:0007669"/>
    <property type="project" value="InterPro"/>
</dbReference>
<dbReference type="FunFam" id="3.10.50.40:FF:000060">
    <property type="entry name" value="Peptidyl-prolyl cis-trans isomerase"/>
    <property type="match status" value="1"/>
</dbReference>
<dbReference type="Gene3D" id="3.10.50.40">
    <property type="match status" value="1"/>
</dbReference>
<dbReference type="Gene3D" id="1.10.287.460">
    <property type="entry name" value="Peptidyl-prolyl cis-trans isomerase, FKBP-type, N-terminal domain"/>
    <property type="match status" value="1"/>
</dbReference>
<dbReference type="InterPro" id="IPR046357">
    <property type="entry name" value="PPIase_dom_sf"/>
</dbReference>
<dbReference type="InterPro" id="IPR001179">
    <property type="entry name" value="PPIase_FKBP_dom"/>
</dbReference>
<dbReference type="InterPro" id="IPR000774">
    <property type="entry name" value="PPIase_FKBP_N"/>
</dbReference>
<dbReference type="InterPro" id="IPR036944">
    <property type="entry name" value="PPIase_FKBP_N_sf"/>
</dbReference>
<dbReference type="PANTHER" id="PTHR43811:SF19">
    <property type="entry name" value="39 KDA FK506-BINDING NUCLEAR PROTEIN"/>
    <property type="match status" value="1"/>
</dbReference>
<dbReference type="PANTHER" id="PTHR43811">
    <property type="entry name" value="FKBP-TYPE PEPTIDYL-PROLYL CIS-TRANS ISOMERASE FKPA"/>
    <property type="match status" value="1"/>
</dbReference>
<dbReference type="Pfam" id="PF00254">
    <property type="entry name" value="FKBP_C"/>
    <property type="match status" value="1"/>
</dbReference>
<dbReference type="Pfam" id="PF01346">
    <property type="entry name" value="FKBP_N"/>
    <property type="match status" value="1"/>
</dbReference>
<dbReference type="SUPFAM" id="SSF54534">
    <property type="entry name" value="FKBP-like"/>
    <property type="match status" value="1"/>
</dbReference>
<dbReference type="PROSITE" id="PS50059">
    <property type="entry name" value="FKBP_PPIASE"/>
    <property type="match status" value="1"/>
</dbReference>
<dbReference type="PROSITE" id="PS51257">
    <property type="entry name" value="PROKAR_LIPOPROTEIN"/>
    <property type="match status" value="1"/>
</dbReference>
<reference key="1">
    <citation type="journal article" date="1999" name="Nat. Genet.">
        <title>Comparative genomes of Chlamydia pneumoniae and C. trachomatis.</title>
        <authorList>
            <person name="Kalman S."/>
            <person name="Mitchell W.P."/>
            <person name="Marathe R."/>
            <person name="Lammel C.J."/>
            <person name="Fan J."/>
            <person name="Hyman R.W."/>
            <person name="Olinger L."/>
            <person name="Grimwood J."/>
            <person name="Davis R.W."/>
            <person name="Stephens R.S."/>
        </authorList>
    </citation>
    <scope>NUCLEOTIDE SEQUENCE [LARGE SCALE GENOMIC DNA]</scope>
    <source>
        <strain>CWL029</strain>
    </source>
</reference>
<reference key="2">
    <citation type="journal article" date="2000" name="Nucleic Acids Res.">
        <title>Genome sequences of Chlamydia trachomatis MoPn and Chlamydia pneumoniae AR39.</title>
        <authorList>
            <person name="Read T.D."/>
            <person name="Brunham R.C."/>
            <person name="Shen C."/>
            <person name="Gill S.R."/>
            <person name="Heidelberg J.F."/>
            <person name="White O."/>
            <person name="Hickey E.K."/>
            <person name="Peterson J.D."/>
            <person name="Utterback T.R."/>
            <person name="Berry K.J."/>
            <person name="Bass S."/>
            <person name="Linher K.D."/>
            <person name="Weidman J.F."/>
            <person name="Khouri H.M."/>
            <person name="Craven B."/>
            <person name="Bowman C."/>
            <person name="Dodson R.J."/>
            <person name="Gwinn M.L."/>
            <person name="Nelson W.C."/>
            <person name="DeBoy R.T."/>
            <person name="Kolonay J.F."/>
            <person name="McClarty G."/>
            <person name="Salzberg S.L."/>
            <person name="Eisen J.A."/>
            <person name="Fraser C.M."/>
        </authorList>
    </citation>
    <scope>NUCLEOTIDE SEQUENCE [LARGE SCALE GENOMIC DNA]</scope>
    <source>
        <strain>AR39</strain>
    </source>
</reference>
<reference key="3">
    <citation type="journal article" date="2000" name="Nucleic Acids Res.">
        <title>Comparison of whole genome sequences of Chlamydia pneumoniae J138 from Japan and CWL029 from USA.</title>
        <authorList>
            <person name="Shirai M."/>
            <person name="Hirakawa H."/>
            <person name="Kimoto M."/>
            <person name="Tabuchi M."/>
            <person name="Kishi F."/>
            <person name="Ouchi K."/>
            <person name="Shiba T."/>
            <person name="Ishii K."/>
            <person name="Hattori M."/>
            <person name="Kuhara S."/>
            <person name="Nakazawa T."/>
        </authorList>
    </citation>
    <scope>NUCLEOTIDE SEQUENCE [LARGE SCALE GENOMIC DNA]</scope>
    <source>
        <strain>J138</strain>
    </source>
</reference>
<reference key="4">
    <citation type="submission" date="2002-05" db="EMBL/GenBank/DDBJ databases">
        <title>The genome sequence of Chlamydia pneumoniae TW183 and comparison with other Chlamydia strains based on whole genome sequence analysis.</title>
        <authorList>
            <person name="Geng M.M."/>
            <person name="Schuhmacher A."/>
            <person name="Muehldorfer I."/>
            <person name="Bensch K.W."/>
            <person name="Schaefer K.P."/>
            <person name="Schneider S."/>
            <person name="Pohl T."/>
            <person name="Essig A."/>
            <person name="Marre R."/>
            <person name="Melchers K."/>
        </authorList>
    </citation>
    <scope>NUCLEOTIDE SEQUENCE [LARGE SCALE GENOMIC DNA]</scope>
    <source>
        <strain>TW-183</strain>
    </source>
</reference>
<keyword id="KW-0998">Cell outer membrane</keyword>
<keyword id="KW-0413">Isomerase</keyword>
<keyword id="KW-0472">Membrane</keyword>
<keyword id="KW-0697">Rotamase</keyword>
<keyword id="KW-0732">Signal</keyword>
<sequence>MNRRWNLVLATVALALSVASCDVRSKDKDKDQGSLVEYKDNKDTNDIELSDNQKLSRTFGHLLARQLRKSEDMFFDIAEVAKGLQAELVCKSAPLTETEYEEKMAEVQKLVFEKKSKENLSLAEKFLKENSKNAGVVEVQPSKLQYKIIKEGAGKAISGKPSALLHYKGSFINGQVFSSSEGNNEPILLPLGQTIPGFALGMQGMKEGETRVLYIHPDLAYGTAGQLPPNSLLIFEINLIQASADEVAAVPQEGNQGE</sequence>
<evidence type="ECO:0000250" key="1"/>
<evidence type="ECO:0000255" key="2">
    <source>
        <dbReference type="PROSITE-ProRule" id="PRU00277"/>
    </source>
</evidence>
<evidence type="ECO:0000255" key="3">
    <source>
        <dbReference type="PROSITE-ProRule" id="PRU00303"/>
    </source>
</evidence>
<evidence type="ECO:0000305" key="4"/>
<accession>Q9Z7P3</accession>
<feature type="signal peptide" evidence="3">
    <location>
        <begin position="1"/>
        <end position="15"/>
    </location>
</feature>
<feature type="chain" id="PRO_0000025528" description="Peptidyl-prolyl cis-trans isomerase Mip">
    <location>
        <begin position="16"/>
        <end position="258"/>
    </location>
</feature>
<feature type="domain" description="PPIase FKBP-type" evidence="2">
    <location>
        <begin position="160"/>
        <end position="243"/>
    </location>
</feature>